<organism>
    <name type="scientific">Bacillus cereus (strain Q1)</name>
    <dbReference type="NCBI Taxonomy" id="361100"/>
    <lineage>
        <taxon>Bacteria</taxon>
        <taxon>Bacillati</taxon>
        <taxon>Bacillota</taxon>
        <taxon>Bacilli</taxon>
        <taxon>Bacillales</taxon>
        <taxon>Bacillaceae</taxon>
        <taxon>Bacillus</taxon>
        <taxon>Bacillus cereus group</taxon>
    </lineage>
</organism>
<gene>
    <name evidence="1" type="primary">tatA</name>
    <name type="ordered locus">BCQ_2180</name>
</gene>
<name>TATA_BACCQ</name>
<reference key="1">
    <citation type="journal article" date="2009" name="J. Bacteriol.">
        <title>Complete genome sequence of the extremophilic Bacillus cereus strain Q1 with industrial applications.</title>
        <authorList>
            <person name="Xiong Z."/>
            <person name="Jiang Y."/>
            <person name="Qi D."/>
            <person name="Lu H."/>
            <person name="Yang F."/>
            <person name="Yang J."/>
            <person name="Chen L."/>
            <person name="Sun L."/>
            <person name="Xu X."/>
            <person name="Xue Y."/>
            <person name="Zhu Y."/>
            <person name="Jin Q."/>
        </authorList>
    </citation>
    <scope>NUCLEOTIDE SEQUENCE [LARGE SCALE GENOMIC DNA]</scope>
    <source>
        <strain>Q1</strain>
    </source>
</reference>
<accession>B9IZP6</accession>
<feature type="chain" id="PRO_1000125193" description="Sec-independent protein translocase protein TatA">
    <location>
        <begin position="1"/>
        <end position="61"/>
    </location>
</feature>
<feature type="transmembrane region" description="Helical" evidence="1">
    <location>
        <begin position="1"/>
        <end position="21"/>
    </location>
</feature>
<keyword id="KW-1003">Cell membrane</keyword>
<keyword id="KW-0472">Membrane</keyword>
<keyword id="KW-0653">Protein transport</keyword>
<keyword id="KW-0811">Translocation</keyword>
<keyword id="KW-0812">Transmembrane</keyword>
<keyword id="KW-1133">Transmembrane helix</keyword>
<keyword id="KW-0813">Transport</keyword>
<sequence>MFSNIGFPGLILILVAVLILFGPKKLPEIGKALGETLKEFKKSTKELTDDAFQEKEKKEKM</sequence>
<proteinExistence type="inferred from homology"/>
<evidence type="ECO:0000255" key="1">
    <source>
        <dbReference type="HAMAP-Rule" id="MF_00236"/>
    </source>
</evidence>
<dbReference type="EMBL" id="CP000227">
    <property type="protein sequence ID" value="ACM12608.1"/>
    <property type="molecule type" value="Genomic_DNA"/>
</dbReference>
<dbReference type="SMR" id="B9IZP6"/>
<dbReference type="KEGG" id="bcq:BCQ_2180"/>
<dbReference type="HOGENOM" id="CLU_086034_6_0_9"/>
<dbReference type="Proteomes" id="UP000000441">
    <property type="component" value="Chromosome"/>
</dbReference>
<dbReference type="GO" id="GO:0033281">
    <property type="term" value="C:TAT protein transport complex"/>
    <property type="evidence" value="ECO:0007669"/>
    <property type="project" value="UniProtKB-UniRule"/>
</dbReference>
<dbReference type="GO" id="GO:0008320">
    <property type="term" value="F:protein transmembrane transporter activity"/>
    <property type="evidence" value="ECO:0007669"/>
    <property type="project" value="UniProtKB-UniRule"/>
</dbReference>
<dbReference type="GO" id="GO:0043953">
    <property type="term" value="P:protein transport by the Tat complex"/>
    <property type="evidence" value="ECO:0007669"/>
    <property type="project" value="UniProtKB-UniRule"/>
</dbReference>
<dbReference type="Gene3D" id="1.20.5.3310">
    <property type="match status" value="1"/>
</dbReference>
<dbReference type="HAMAP" id="MF_00236">
    <property type="entry name" value="TatA_E"/>
    <property type="match status" value="1"/>
</dbReference>
<dbReference type="InterPro" id="IPR003369">
    <property type="entry name" value="TatA/B/E"/>
</dbReference>
<dbReference type="InterPro" id="IPR006312">
    <property type="entry name" value="TatA/E"/>
</dbReference>
<dbReference type="NCBIfam" id="NF011430">
    <property type="entry name" value="PRK14861.1"/>
    <property type="match status" value="1"/>
</dbReference>
<dbReference type="NCBIfam" id="TIGR01411">
    <property type="entry name" value="tatAE"/>
    <property type="match status" value="1"/>
</dbReference>
<dbReference type="PANTHER" id="PTHR42982">
    <property type="entry name" value="SEC-INDEPENDENT PROTEIN TRANSLOCASE PROTEIN TATA"/>
    <property type="match status" value="1"/>
</dbReference>
<dbReference type="PANTHER" id="PTHR42982:SF1">
    <property type="entry name" value="SEC-INDEPENDENT PROTEIN TRANSLOCASE PROTEIN TATA"/>
    <property type="match status" value="1"/>
</dbReference>
<dbReference type="Pfam" id="PF02416">
    <property type="entry name" value="TatA_B_E"/>
    <property type="match status" value="1"/>
</dbReference>
<dbReference type="PRINTS" id="PR01506">
    <property type="entry name" value="TATBPROTEIN"/>
</dbReference>
<protein>
    <recommendedName>
        <fullName evidence="1">Sec-independent protein translocase protein TatA</fullName>
    </recommendedName>
</protein>
<comment type="function">
    <text evidence="1">Part of the twin-arginine translocation (Tat) system that transports large folded proteins containing a characteristic twin-arginine motif in their signal peptide across membranes. TatA could form the protein-conducting channel of the Tat system.</text>
</comment>
<comment type="subunit">
    <text evidence="1">Forms a complex with TatC.</text>
</comment>
<comment type="subcellular location">
    <subcellularLocation>
        <location evidence="1">Cell membrane</location>
        <topology evidence="1">Single-pass membrane protein</topology>
    </subcellularLocation>
</comment>
<comment type="similarity">
    <text evidence="1">Belongs to the TatA/E family.</text>
</comment>